<dbReference type="EMBL" id="X78118">
    <property type="protein sequence ID" value="CAA55008.1"/>
    <property type="molecule type" value="mRNA"/>
</dbReference>
<dbReference type="PIR" id="S51940">
    <property type="entry name" value="S51940"/>
</dbReference>
<dbReference type="SMR" id="Q43804"/>
<dbReference type="EnsemblPlants" id="VVA10868">
    <property type="protein sequence ID" value="VVA10868"/>
    <property type="gene ID" value="Prudul26B006731"/>
</dbReference>
<dbReference type="Gramene" id="VVA10868">
    <property type="protein sequence ID" value="VVA10868"/>
    <property type="gene ID" value="Prudul26B006731"/>
</dbReference>
<dbReference type="OMA" id="FGQQHIT"/>
<dbReference type="GO" id="GO:0005576">
    <property type="term" value="C:extracellular region"/>
    <property type="evidence" value="ECO:0007669"/>
    <property type="project" value="TreeGrafter"/>
</dbReference>
<dbReference type="GO" id="GO:0016020">
    <property type="term" value="C:membrane"/>
    <property type="evidence" value="ECO:0007669"/>
    <property type="project" value="UniProtKB-SubCell"/>
</dbReference>
<dbReference type="GO" id="GO:0012511">
    <property type="term" value="C:monolayer-surrounded lipid storage body"/>
    <property type="evidence" value="ECO:0007669"/>
    <property type="project" value="InterPro"/>
</dbReference>
<dbReference type="GO" id="GO:0019915">
    <property type="term" value="P:lipid storage"/>
    <property type="evidence" value="ECO:0007669"/>
    <property type="project" value="TreeGrafter"/>
</dbReference>
<dbReference type="GO" id="GO:0009791">
    <property type="term" value="P:post-embryonic development"/>
    <property type="evidence" value="ECO:0007669"/>
    <property type="project" value="UniProtKB-ARBA"/>
</dbReference>
<dbReference type="GO" id="GO:0048608">
    <property type="term" value="P:reproductive structure development"/>
    <property type="evidence" value="ECO:0007669"/>
    <property type="project" value="UniProtKB-ARBA"/>
</dbReference>
<dbReference type="GO" id="GO:0019953">
    <property type="term" value="P:sexual reproduction"/>
    <property type="evidence" value="ECO:0007669"/>
    <property type="project" value="TreeGrafter"/>
</dbReference>
<dbReference type="InterPro" id="IPR000136">
    <property type="entry name" value="Oleosin"/>
</dbReference>
<dbReference type="PANTHER" id="PTHR33203">
    <property type="entry name" value="OLEOSIN"/>
    <property type="match status" value="1"/>
</dbReference>
<dbReference type="PANTHER" id="PTHR33203:SF25">
    <property type="entry name" value="OLEOSIN 18.5 KDA"/>
    <property type="match status" value="1"/>
</dbReference>
<dbReference type="Pfam" id="PF01277">
    <property type="entry name" value="Oleosin"/>
    <property type="match status" value="1"/>
</dbReference>
<dbReference type="PROSITE" id="PS00811">
    <property type="entry name" value="OLEOSINS"/>
    <property type="match status" value="1"/>
</dbReference>
<keyword id="KW-0007">Acetylation</keyword>
<keyword id="KW-0551">Lipid droplet</keyword>
<keyword id="KW-0472">Membrane</keyword>
<keyword id="KW-0812">Transmembrane</keyword>
<keyword id="KW-1133">Transmembrane helix</keyword>
<reference key="1">
    <citation type="journal article" date="1995" name="Plant Mol. Biol.">
        <title>Molecular characterization of cDNAs corresponding to genes expressed during almond (Prunus amygdalus Batsch) seed development.</title>
        <authorList>
            <person name="Garcia-Mas J."/>
            <person name="Messeguer R."/>
            <person name="Arus P."/>
            <person name="Puigdomenech P."/>
        </authorList>
    </citation>
    <scope>NUCLEOTIDE SEQUENCE [MRNA]</scope>
    <source>
        <strain>cv. Texas</strain>
        <tissue>Immature seed</tissue>
    </source>
</reference>
<gene>
    <name type="primary">OLE1</name>
</gene>
<name>OLEO1_PRUDU</name>
<comment type="function">
    <text evidence="1">May have a structural role to stabilize the lipid body during desiccation of the seed by preventing coalescence of the oil. Probably interacts with both lipid and phospholipid moieties of lipid bodies. May also provide recognition signals for specific lipase anchorage in lipolysis during seedling growth (By similarity).</text>
</comment>
<comment type="subcellular location">
    <subcellularLocation>
        <location>Lipid droplet</location>
    </subcellularLocation>
    <subcellularLocation>
        <location>Membrane</location>
        <topology>Multi-pass membrane protein</topology>
    </subcellularLocation>
    <text>Surface of oil bodies. Oleosins exist at a monolayer lipid/water interface.</text>
</comment>
<comment type="similarity">
    <text evidence="3">Belongs to the oleosin family.</text>
</comment>
<feature type="initiator methionine" description="Removed" evidence="1">
    <location>
        <position position="1"/>
    </location>
</feature>
<feature type="chain" id="PRO_0000108141" description="Oleosin 1">
    <location>
        <begin position="2"/>
        <end position="148"/>
    </location>
</feature>
<feature type="transmembrane region" description="Helical" evidence="2">
    <location>
        <begin position="37"/>
        <end position="57"/>
    </location>
</feature>
<feature type="transmembrane region" description="Helical" evidence="2">
    <location>
        <begin position="81"/>
        <end position="101"/>
    </location>
</feature>
<feature type="region of interest" description="Polar">
    <location>
        <begin position="2"/>
        <end position="28"/>
    </location>
</feature>
<feature type="region of interest" description="Hydrophobic">
    <location>
        <begin position="29"/>
        <end position="148"/>
    </location>
</feature>
<feature type="modified residue" description="N-acetylalanine" evidence="1">
    <location>
        <position position="2"/>
    </location>
</feature>
<protein>
    <recommendedName>
        <fullName>Oleosin 1</fullName>
    </recommendedName>
</protein>
<sequence>MADQHFQQPLHFQGSYGQQQPRSYQVAKAATAVTAGGSLLVLSGLVLAGTVIALTIATPLLVIFSPVLVPALITVALITMGFLTSGGFGVAAVTVLSWIYKYVTGKQPPGADQLDQARHKLAGKARDIKDRAEQFGQQHVPSGQQQSS</sequence>
<evidence type="ECO:0000250" key="1"/>
<evidence type="ECO:0000255" key="2"/>
<evidence type="ECO:0000305" key="3"/>
<organism>
    <name type="scientific">Prunus dulcis</name>
    <name type="common">Almond</name>
    <name type="synonym">Amygdalus dulcis</name>
    <dbReference type="NCBI Taxonomy" id="3755"/>
    <lineage>
        <taxon>Eukaryota</taxon>
        <taxon>Viridiplantae</taxon>
        <taxon>Streptophyta</taxon>
        <taxon>Embryophyta</taxon>
        <taxon>Tracheophyta</taxon>
        <taxon>Spermatophyta</taxon>
        <taxon>Magnoliopsida</taxon>
        <taxon>eudicotyledons</taxon>
        <taxon>Gunneridae</taxon>
        <taxon>Pentapetalae</taxon>
        <taxon>rosids</taxon>
        <taxon>fabids</taxon>
        <taxon>Rosales</taxon>
        <taxon>Rosaceae</taxon>
        <taxon>Amygdaloideae</taxon>
        <taxon>Amygdaleae</taxon>
        <taxon>Prunus</taxon>
    </lineage>
</organism>
<accession>Q43804</accession>
<proteinExistence type="evidence at transcript level"/>